<sequence length="127" mass="14393">MARVKRAVNAHKKRRVILERAKGYRGQRSRLYRKAKEQLLHSFVYSYGDRRKRKGDFRRLWIQRINAASRANGLTYNRLIQGLKAASIEVDRRMLSELAVNDAAAFAGLVKLAKAALPADTSAPVAN</sequence>
<evidence type="ECO:0000255" key="1">
    <source>
        <dbReference type="HAMAP-Rule" id="MF_00382"/>
    </source>
</evidence>
<evidence type="ECO:0000305" key="2"/>
<keyword id="KW-1185">Reference proteome</keyword>
<keyword id="KW-0687">Ribonucleoprotein</keyword>
<keyword id="KW-0689">Ribosomal protein</keyword>
<keyword id="KW-0694">RNA-binding</keyword>
<keyword id="KW-0699">rRNA-binding</keyword>
<organism>
    <name type="scientific">Renibacterium salmoninarum (strain ATCC 33209 / DSM 20767 / JCM 11484 / NBRC 15589 / NCIMB 2235)</name>
    <dbReference type="NCBI Taxonomy" id="288705"/>
    <lineage>
        <taxon>Bacteria</taxon>
        <taxon>Bacillati</taxon>
        <taxon>Actinomycetota</taxon>
        <taxon>Actinomycetes</taxon>
        <taxon>Micrococcales</taxon>
        <taxon>Micrococcaceae</taxon>
        <taxon>Renibacterium</taxon>
    </lineage>
</organism>
<accession>A9WQB1</accession>
<dbReference type="EMBL" id="CP000910">
    <property type="protein sequence ID" value="ABY22494.1"/>
    <property type="molecule type" value="Genomic_DNA"/>
</dbReference>
<dbReference type="RefSeq" id="WP_012244193.1">
    <property type="nucleotide sequence ID" value="NC_010168.1"/>
</dbReference>
<dbReference type="SMR" id="A9WQB1"/>
<dbReference type="STRING" id="288705.RSal33209_0747"/>
<dbReference type="KEGG" id="rsa:RSal33209_0747"/>
<dbReference type="eggNOG" id="COG0292">
    <property type="taxonomic scope" value="Bacteria"/>
</dbReference>
<dbReference type="HOGENOM" id="CLU_123265_0_0_11"/>
<dbReference type="Proteomes" id="UP000002007">
    <property type="component" value="Chromosome"/>
</dbReference>
<dbReference type="GO" id="GO:1990904">
    <property type="term" value="C:ribonucleoprotein complex"/>
    <property type="evidence" value="ECO:0007669"/>
    <property type="project" value="UniProtKB-KW"/>
</dbReference>
<dbReference type="GO" id="GO:0005840">
    <property type="term" value="C:ribosome"/>
    <property type="evidence" value="ECO:0007669"/>
    <property type="project" value="UniProtKB-KW"/>
</dbReference>
<dbReference type="GO" id="GO:0019843">
    <property type="term" value="F:rRNA binding"/>
    <property type="evidence" value="ECO:0007669"/>
    <property type="project" value="UniProtKB-UniRule"/>
</dbReference>
<dbReference type="GO" id="GO:0003735">
    <property type="term" value="F:structural constituent of ribosome"/>
    <property type="evidence" value="ECO:0007669"/>
    <property type="project" value="InterPro"/>
</dbReference>
<dbReference type="GO" id="GO:0000027">
    <property type="term" value="P:ribosomal large subunit assembly"/>
    <property type="evidence" value="ECO:0007669"/>
    <property type="project" value="UniProtKB-UniRule"/>
</dbReference>
<dbReference type="GO" id="GO:0006412">
    <property type="term" value="P:translation"/>
    <property type="evidence" value="ECO:0007669"/>
    <property type="project" value="InterPro"/>
</dbReference>
<dbReference type="CDD" id="cd07026">
    <property type="entry name" value="Ribosomal_L20"/>
    <property type="match status" value="1"/>
</dbReference>
<dbReference type="FunFam" id="1.10.1900.20:FF:000001">
    <property type="entry name" value="50S ribosomal protein L20"/>
    <property type="match status" value="1"/>
</dbReference>
<dbReference type="Gene3D" id="6.10.160.10">
    <property type="match status" value="1"/>
</dbReference>
<dbReference type="Gene3D" id="1.10.1900.20">
    <property type="entry name" value="Ribosomal protein L20"/>
    <property type="match status" value="1"/>
</dbReference>
<dbReference type="HAMAP" id="MF_00382">
    <property type="entry name" value="Ribosomal_bL20"/>
    <property type="match status" value="1"/>
</dbReference>
<dbReference type="InterPro" id="IPR005813">
    <property type="entry name" value="Ribosomal_bL20"/>
</dbReference>
<dbReference type="InterPro" id="IPR049946">
    <property type="entry name" value="RIBOSOMAL_L20_CS"/>
</dbReference>
<dbReference type="InterPro" id="IPR035566">
    <property type="entry name" value="Ribosomal_protein_bL20_C"/>
</dbReference>
<dbReference type="NCBIfam" id="TIGR01032">
    <property type="entry name" value="rplT_bact"/>
    <property type="match status" value="1"/>
</dbReference>
<dbReference type="PANTHER" id="PTHR10986">
    <property type="entry name" value="39S RIBOSOMAL PROTEIN L20"/>
    <property type="match status" value="1"/>
</dbReference>
<dbReference type="Pfam" id="PF00453">
    <property type="entry name" value="Ribosomal_L20"/>
    <property type="match status" value="1"/>
</dbReference>
<dbReference type="PRINTS" id="PR00062">
    <property type="entry name" value="RIBOSOMALL20"/>
</dbReference>
<dbReference type="SUPFAM" id="SSF74731">
    <property type="entry name" value="Ribosomal protein L20"/>
    <property type="match status" value="1"/>
</dbReference>
<dbReference type="PROSITE" id="PS00937">
    <property type="entry name" value="RIBOSOMAL_L20"/>
    <property type="match status" value="1"/>
</dbReference>
<protein>
    <recommendedName>
        <fullName evidence="1">Large ribosomal subunit protein bL20</fullName>
    </recommendedName>
    <alternativeName>
        <fullName evidence="2">50S ribosomal protein L20</fullName>
    </alternativeName>
</protein>
<reference key="1">
    <citation type="journal article" date="2008" name="J. Bacteriol.">
        <title>Genome sequence of the fish pathogen Renibacterium salmoninarum suggests reductive evolution away from an environmental Arthrobacter ancestor.</title>
        <authorList>
            <person name="Wiens G.D."/>
            <person name="Rockey D.D."/>
            <person name="Wu Z."/>
            <person name="Chang J."/>
            <person name="Levy R."/>
            <person name="Crane S."/>
            <person name="Chen D.S."/>
            <person name="Capri G.R."/>
            <person name="Burnett J.R."/>
            <person name="Sudheesh P.S."/>
            <person name="Schipma M.J."/>
            <person name="Burd H."/>
            <person name="Bhattacharyya A."/>
            <person name="Rhodes L.D."/>
            <person name="Kaul R."/>
            <person name="Strom M.S."/>
        </authorList>
    </citation>
    <scope>NUCLEOTIDE SEQUENCE [LARGE SCALE GENOMIC DNA]</scope>
    <source>
        <strain>ATCC 33209 / DSM 20767 / JCM 11484 / NBRC 15589 / NCIMB 2235</strain>
    </source>
</reference>
<feature type="chain" id="PRO_1000080087" description="Large ribosomal subunit protein bL20">
    <location>
        <begin position="1"/>
        <end position="127"/>
    </location>
</feature>
<gene>
    <name evidence="1" type="primary">rplT</name>
    <name type="ordered locus">RSal33209_0747</name>
</gene>
<name>RL20_RENSM</name>
<proteinExistence type="inferred from homology"/>
<comment type="function">
    <text evidence="1">Binds directly to 23S ribosomal RNA and is necessary for the in vitro assembly process of the 50S ribosomal subunit. It is not involved in the protein synthesizing functions of that subunit.</text>
</comment>
<comment type="similarity">
    <text evidence="1">Belongs to the bacterial ribosomal protein bL20 family.</text>
</comment>